<reference key="1">
    <citation type="journal article" date="2002" name="Nature">
        <title>Comparison of the genomes of two Xanthomonas pathogens with differing host specificities.</title>
        <authorList>
            <person name="da Silva A.C.R."/>
            <person name="Ferro J.A."/>
            <person name="Reinach F.C."/>
            <person name="Farah C.S."/>
            <person name="Furlan L.R."/>
            <person name="Quaggio R.B."/>
            <person name="Monteiro-Vitorello C.B."/>
            <person name="Van Sluys M.A."/>
            <person name="Almeida N.F. Jr."/>
            <person name="Alves L.M.C."/>
            <person name="do Amaral A.M."/>
            <person name="Bertolini M.C."/>
            <person name="Camargo L.E.A."/>
            <person name="Camarotte G."/>
            <person name="Cannavan F."/>
            <person name="Cardozo J."/>
            <person name="Chambergo F."/>
            <person name="Ciapina L.P."/>
            <person name="Cicarelli R.M.B."/>
            <person name="Coutinho L.L."/>
            <person name="Cursino-Santos J.R."/>
            <person name="El-Dorry H."/>
            <person name="Faria J.B."/>
            <person name="Ferreira A.J.S."/>
            <person name="Ferreira R.C.C."/>
            <person name="Ferro M.I.T."/>
            <person name="Formighieri E.F."/>
            <person name="Franco M.C."/>
            <person name="Greggio C.C."/>
            <person name="Gruber A."/>
            <person name="Katsuyama A.M."/>
            <person name="Kishi L.T."/>
            <person name="Leite R.P."/>
            <person name="Lemos E.G.M."/>
            <person name="Lemos M.V.F."/>
            <person name="Locali E.C."/>
            <person name="Machado M.A."/>
            <person name="Madeira A.M.B.N."/>
            <person name="Martinez-Rossi N.M."/>
            <person name="Martins E.C."/>
            <person name="Meidanis J."/>
            <person name="Menck C.F.M."/>
            <person name="Miyaki C.Y."/>
            <person name="Moon D.H."/>
            <person name="Moreira L.M."/>
            <person name="Novo M.T.M."/>
            <person name="Okura V.K."/>
            <person name="Oliveira M.C."/>
            <person name="Oliveira V.R."/>
            <person name="Pereira H.A."/>
            <person name="Rossi A."/>
            <person name="Sena J.A.D."/>
            <person name="Silva C."/>
            <person name="de Souza R.F."/>
            <person name="Spinola L.A.F."/>
            <person name="Takita M.A."/>
            <person name="Tamura R.E."/>
            <person name="Teixeira E.C."/>
            <person name="Tezza R.I.D."/>
            <person name="Trindade dos Santos M."/>
            <person name="Truffi D."/>
            <person name="Tsai S.M."/>
            <person name="White F.F."/>
            <person name="Setubal J.C."/>
            <person name="Kitajima J.P."/>
        </authorList>
    </citation>
    <scope>NUCLEOTIDE SEQUENCE [LARGE SCALE GENOMIC DNA]</scope>
    <source>
        <strain>306</strain>
    </source>
</reference>
<proteinExistence type="inferred from homology"/>
<evidence type="ECO:0000255" key="1">
    <source>
        <dbReference type="HAMAP-Rule" id="MF_01416"/>
    </source>
</evidence>
<keyword id="KW-0066">ATP synthesis</keyword>
<keyword id="KW-0997">Cell inner membrane</keyword>
<keyword id="KW-1003">Cell membrane</keyword>
<keyword id="KW-0139">CF(1)</keyword>
<keyword id="KW-0375">Hydrogen ion transport</keyword>
<keyword id="KW-0406">Ion transport</keyword>
<keyword id="KW-0472">Membrane</keyword>
<keyword id="KW-0813">Transport</keyword>
<accession>Q8PGG4</accession>
<comment type="function">
    <text evidence="1">F(1)F(0) ATP synthase produces ATP from ADP in the presence of a proton or sodium gradient. F-type ATPases consist of two structural domains, F(1) containing the extramembraneous catalytic core and F(0) containing the membrane proton channel, linked together by a central stalk and a peripheral stalk. During catalysis, ATP synthesis in the catalytic domain of F(1) is coupled via a rotary mechanism of the central stalk subunits to proton translocation.</text>
</comment>
<comment type="function">
    <text evidence="1">This protein is part of the stalk that links CF(0) to CF(1). It either transmits conformational changes from CF(0) to CF(1) or is implicated in proton conduction.</text>
</comment>
<comment type="subunit">
    <text evidence="1">F-type ATPases have 2 components, F(1) - the catalytic core - and F(0) - the membrane proton channel. F(1) has five subunits: alpha(3), beta(3), gamma(1), delta(1), epsilon(1). F(0) has three main subunits: a(1), b(2) and c(10-14). The alpha and beta chains form an alternating ring which encloses part of the gamma chain. F(1) is attached to F(0) by a central stalk formed by the gamma and epsilon chains, while a peripheral stalk is formed by the delta and b chains.</text>
</comment>
<comment type="subcellular location">
    <subcellularLocation>
        <location evidence="1">Cell inner membrane</location>
        <topology evidence="1">Peripheral membrane protein</topology>
    </subcellularLocation>
</comment>
<comment type="similarity">
    <text evidence="1">Belongs to the ATPase delta chain family.</text>
</comment>
<protein>
    <recommendedName>
        <fullName evidence="1">ATP synthase subunit delta</fullName>
    </recommendedName>
    <alternativeName>
        <fullName evidence="1">ATP synthase F(1) sector subunit delta</fullName>
    </alternativeName>
    <alternativeName>
        <fullName evidence="1">F-type ATPase subunit delta</fullName>
        <shortName evidence="1">F-ATPase subunit delta</shortName>
    </alternativeName>
</protein>
<dbReference type="EMBL" id="AE008923">
    <property type="protein sequence ID" value="AAM38495.1"/>
    <property type="molecule type" value="Genomic_DNA"/>
</dbReference>
<dbReference type="RefSeq" id="WP_003484001.1">
    <property type="nucleotide sequence ID" value="NC_003919.1"/>
</dbReference>
<dbReference type="SMR" id="Q8PGG4"/>
<dbReference type="KEGG" id="xac:XAC3652"/>
<dbReference type="eggNOG" id="COG0712">
    <property type="taxonomic scope" value="Bacteria"/>
</dbReference>
<dbReference type="HOGENOM" id="CLU_085114_3_0_6"/>
<dbReference type="Proteomes" id="UP000000576">
    <property type="component" value="Chromosome"/>
</dbReference>
<dbReference type="GO" id="GO:0005886">
    <property type="term" value="C:plasma membrane"/>
    <property type="evidence" value="ECO:0007669"/>
    <property type="project" value="UniProtKB-SubCell"/>
</dbReference>
<dbReference type="GO" id="GO:0045259">
    <property type="term" value="C:proton-transporting ATP synthase complex"/>
    <property type="evidence" value="ECO:0007669"/>
    <property type="project" value="UniProtKB-KW"/>
</dbReference>
<dbReference type="GO" id="GO:0046933">
    <property type="term" value="F:proton-transporting ATP synthase activity, rotational mechanism"/>
    <property type="evidence" value="ECO:0007669"/>
    <property type="project" value="UniProtKB-UniRule"/>
</dbReference>
<dbReference type="Gene3D" id="1.10.520.20">
    <property type="entry name" value="N-terminal domain of the delta subunit of the F1F0-ATP synthase"/>
    <property type="match status" value="1"/>
</dbReference>
<dbReference type="HAMAP" id="MF_01416">
    <property type="entry name" value="ATP_synth_delta_bact"/>
    <property type="match status" value="1"/>
</dbReference>
<dbReference type="InterPro" id="IPR026015">
    <property type="entry name" value="ATP_synth_OSCP/delta_N_sf"/>
</dbReference>
<dbReference type="InterPro" id="IPR000711">
    <property type="entry name" value="ATPase_OSCP/dsu"/>
</dbReference>
<dbReference type="NCBIfam" id="TIGR01145">
    <property type="entry name" value="ATP_synt_delta"/>
    <property type="match status" value="1"/>
</dbReference>
<dbReference type="NCBIfam" id="NF004402">
    <property type="entry name" value="PRK05758.2-2"/>
    <property type="match status" value="1"/>
</dbReference>
<dbReference type="PANTHER" id="PTHR11910">
    <property type="entry name" value="ATP SYNTHASE DELTA CHAIN"/>
    <property type="match status" value="1"/>
</dbReference>
<dbReference type="Pfam" id="PF00213">
    <property type="entry name" value="OSCP"/>
    <property type="match status" value="1"/>
</dbReference>
<dbReference type="PRINTS" id="PR00125">
    <property type="entry name" value="ATPASEDELTA"/>
</dbReference>
<dbReference type="SUPFAM" id="SSF47928">
    <property type="entry name" value="N-terminal domain of the delta subunit of the F1F0-ATP synthase"/>
    <property type="match status" value="1"/>
</dbReference>
<organism>
    <name type="scientific">Xanthomonas axonopodis pv. citri (strain 306)</name>
    <dbReference type="NCBI Taxonomy" id="190486"/>
    <lineage>
        <taxon>Bacteria</taxon>
        <taxon>Pseudomonadati</taxon>
        <taxon>Pseudomonadota</taxon>
        <taxon>Gammaproteobacteria</taxon>
        <taxon>Lysobacterales</taxon>
        <taxon>Lysobacteraceae</taxon>
        <taxon>Xanthomonas</taxon>
    </lineage>
</organism>
<name>ATPD_XANAC</name>
<sequence length="175" mass="18218">MSQALTLARPYGRAAFAIAREGGNFAPWSDALAFSAQVAGDPRVAALLLNPALGQEQAVTLLAPPQAGEDYLRFLGVLADAQRLSLLPEVAGLYEHLRAEAEHVVKATVTSAAAMSQTELDTIAAALKKRFGRDVDITTAVDASLIGGAVIDTGDVVIDGSLKGKLARLQSSLAH</sequence>
<gene>
    <name evidence="1" type="primary">atpH</name>
    <name type="ordered locus">XAC3652</name>
</gene>
<feature type="chain" id="PRO_1000184835" description="ATP synthase subunit delta">
    <location>
        <begin position="1"/>
        <end position="175"/>
    </location>
</feature>